<sequence>MSYSRSHQFFERARKVIPGGVNSPVRAFKAVGRQPLFIERAEGCTLVDADGNRYIDYVGSWGPMIVGHSHPKVVEAICDAAARGTSFGAPTALEIELAEQVCAAFPNMESVRMVSSGTEATMSAIRLARGVTGRDKILKFEGCYHGHADSLLVDAGSGVATFGIPASPGVPADFARHTLTAPYNDLGRVRALVEEHKADLAAIILEPIAGNMGCVPPQPGFLEGLRALCDQHEILLIIDEVMTGFRVSYGGAQQLYGVRGDLVCLGKVIGGGLPVGAFGGRQDIMRHLAPDGGVYQAGTLSGNPLAMSAGIATLKLIREEGVYEQLEQRSAYLAEGLRQAAAAAGVPACLQRVGSMFCNYFQTGPVTSFADAKASDTEAFARYFGQMLDNGVHLAPSQFEAGFVSLAHTVEDIDRTVEAAHRSLKAI</sequence>
<evidence type="ECO:0000255" key="1">
    <source>
        <dbReference type="HAMAP-Rule" id="MF_00375"/>
    </source>
</evidence>
<accession>Q3A7W5</accession>
<organism>
    <name type="scientific">Syntrophotalea carbinolica (strain DSM 2380 / NBRC 103641 / GraBd1)</name>
    <name type="common">Pelobacter carbinolicus</name>
    <dbReference type="NCBI Taxonomy" id="338963"/>
    <lineage>
        <taxon>Bacteria</taxon>
        <taxon>Pseudomonadati</taxon>
        <taxon>Thermodesulfobacteriota</taxon>
        <taxon>Desulfuromonadia</taxon>
        <taxon>Desulfuromonadales</taxon>
        <taxon>Syntrophotaleaceae</taxon>
        <taxon>Syntrophotalea</taxon>
    </lineage>
</organism>
<gene>
    <name evidence="1" type="primary">hemL</name>
    <name type="ordered locus">Pcar_0266</name>
</gene>
<dbReference type="EC" id="5.4.3.8" evidence="1"/>
<dbReference type="EMBL" id="CP000142">
    <property type="protein sequence ID" value="ABA87527.1"/>
    <property type="molecule type" value="Genomic_DNA"/>
</dbReference>
<dbReference type="RefSeq" id="WP_011339935.1">
    <property type="nucleotide sequence ID" value="NC_007498.2"/>
</dbReference>
<dbReference type="SMR" id="Q3A7W5"/>
<dbReference type="STRING" id="338963.Pcar_0266"/>
<dbReference type="KEGG" id="pca:Pcar_0266"/>
<dbReference type="eggNOG" id="COG0001">
    <property type="taxonomic scope" value="Bacteria"/>
</dbReference>
<dbReference type="HOGENOM" id="CLU_016922_1_5_7"/>
<dbReference type="OrthoDB" id="9801052at2"/>
<dbReference type="UniPathway" id="UPA00251">
    <property type="reaction ID" value="UER00317"/>
</dbReference>
<dbReference type="Proteomes" id="UP000002534">
    <property type="component" value="Chromosome"/>
</dbReference>
<dbReference type="GO" id="GO:0005737">
    <property type="term" value="C:cytoplasm"/>
    <property type="evidence" value="ECO:0007669"/>
    <property type="project" value="UniProtKB-SubCell"/>
</dbReference>
<dbReference type="GO" id="GO:0042286">
    <property type="term" value="F:glutamate-1-semialdehyde 2,1-aminomutase activity"/>
    <property type="evidence" value="ECO:0007669"/>
    <property type="project" value="UniProtKB-UniRule"/>
</dbReference>
<dbReference type="GO" id="GO:0030170">
    <property type="term" value="F:pyridoxal phosphate binding"/>
    <property type="evidence" value="ECO:0007669"/>
    <property type="project" value="InterPro"/>
</dbReference>
<dbReference type="GO" id="GO:0008483">
    <property type="term" value="F:transaminase activity"/>
    <property type="evidence" value="ECO:0007669"/>
    <property type="project" value="InterPro"/>
</dbReference>
<dbReference type="GO" id="GO:0006782">
    <property type="term" value="P:protoporphyrinogen IX biosynthetic process"/>
    <property type="evidence" value="ECO:0007669"/>
    <property type="project" value="UniProtKB-UniRule"/>
</dbReference>
<dbReference type="CDD" id="cd00610">
    <property type="entry name" value="OAT_like"/>
    <property type="match status" value="1"/>
</dbReference>
<dbReference type="FunFam" id="3.40.640.10:FF:000021">
    <property type="entry name" value="Glutamate-1-semialdehyde 2,1-aminomutase"/>
    <property type="match status" value="1"/>
</dbReference>
<dbReference type="Gene3D" id="3.90.1150.10">
    <property type="entry name" value="Aspartate Aminotransferase, domain 1"/>
    <property type="match status" value="1"/>
</dbReference>
<dbReference type="Gene3D" id="3.40.640.10">
    <property type="entry name" value="Type I PLP-dependent aspartate aminotransferase-like (Major domain)"/>
    <property type="match status" value="1"/>
</dbReference>
<dbReference type="HAMAP" id="MF_00375">
    <property type="entry name" value="HemL_aminotrans_3"/>
    <property type="match status" value="1"/>
</dbReference>
<dbReference type="InterPro" id="IPR004639">
    <property type="entry name" value="4pyrrol_synth_GluAld_NH2Trfase"/>
</dbReference>
<dbReference type="InterPro" id="IPR005814">
    <property type="entry name" value="Aminotrans_3"/>
</dbReference>
<dbReference type="InterPro" id="IPR049704">
    <property type="entry name" value="Aminotrans_3_PPA_site"/>
</dbReference>
<dbReference type="InterPro" id="IPR015424">
    <property type="entry name" value="PyrdxlP-dep_Trfase"/>
</dbReference>
<dbReference type="InterPro" id="IPR015421">
    <property type="entry name" value="PyrdxlP-dep_Trfase_major"/>
</dbReference>
<dbReference type="InterPro" id="IPR015422">
    <property type="entry name" value="PyrdxlP-dep_Trfase_small"/>
</dbReference>
<dbReference type="NCBIfam" id="TIGR00713">
    <property type="entry name" value="hemL"/>
    <property type="match status" value="1"/>
</dbReference>
<dbReference type="NCBIfam" id="NF000818">
    <property type="entry name" value="PRK00062.1"/>
    <property type="match status" value="1"/>
</dbReference>
<dbReference type="PANTHER" id="PTHR43713">
    <property type="entry name" value="GLUTAMATE-1-SEMIALDEHYDE 2,1-AMINOMUTASE"/>
    <property type="match status" value="1"/>
</dbReference>
<dbReference type="PANTHER" id="PTHR43713:SF3">
    <property type="entry name" value="GLUTAMATE-1-SEMIALDEHYDE 2,1-AMINOMUTASE 1, CHLOROPLASTIC-RELATED"/>
    <property type="match status" value="1"/>
</dbReference>
<dbReference type="Pfam" id="PF00202">
    <property type="entry name" value="Aminotran_3"/>
    <property type="match status" value="1"/>
</dbReference>
<dbReference type="SUPFAM" id="SSF53383">
    <property type="entry name" value="PLP-dependent transferases"/>
    <property type="match status" value="1"/>
</dbReference>
<dbReference type="PROSITE" id="PS00600">
    <property type="entry name" value="AA_TRANSFER_CLASS_3"/>
    <property type="match status" value="1"/>
</dbReference>
<feature type="chain" id="PRO_0000243594" description="Glutamate-1-semialdehyde 2,1-aminomutase">
    <location>
        <begin position="1"/>
        <end position="427"/>
    </location>
</feature>
<feature type="modified residue" description="N6-(pyridoxal phosphate)lysine" evidence="1">
    <location>
        <position position="267"/>
    </location>
</feature>
<comment type="catalytic activity">
    <reaction evidence="1">
        <text>(S)-4-amino-5-oxopentanoate = 5-aminolevulinate</text>
        <dbReference type="Rhea" id="RHEA:14265"/>
        <dbReference type="ChEBI" id="CHEBI:57501"/>
        <dbReference type="ChEBI" id="CHEBI:356416"/>
        <dbReference type="EC" id="5.4.3.8"/>
    </reaction>
</comment>
<comment type="cofactor">
    <cofactor evidence="1">
        <name>pyridoxal 5'-phosphate</name>
        <dbReference type="ChEBI" id="CHEBI:597326"/>
    </cofactor>
</comment>
<comment type="pathway">
    <text evidence="1">Porphyrin-containing compound metabolism; protoporphyrin-IX biosynthesis; 5-aminolevulinate from L-glutamyl-tRNA(Glu): step 2/2.</text>
</comment>
<comment type="subunit">
    <text evidence="1">Homodimer.</text>
</comment>
<comment type="subcellular location">
    <subcellularLocation>
        <location evidence="1">Cytoplasm</location>
    </subcellularLocation>
</comment>
<comment type="similarity">
    <text evidence="1">Belongs to the class-III pyridoxal-phosphate-dependent aminotransferase family. HemL subfamily.</text>
</comment>
<reference key="1">
    <citation type="submission" date="2005-10" db="EMBL/GenBank/DDBJ databases">
        <title>Complete sequence of Pelobacter carbinolicus DSM 2380.</title>
        <authorList>
            <person name="Copeland A."/>
            <person name="Lucas S."/>
            <person name="Lapidus A."/>
            <person name="Barry K."/>
            <person name="Detter J.C."/>
            <person name="Glavina T."/>
            <person name="Hammon N."/>
            <person name="Israni S."/>
            <person name="Pitluck S."/>
            <person name="Chertkov O."/>
            <person name="Schmutz J."/>
            <person name="Larimer F."/>
            <person name="Land M."/>
            <person name="Kyrpides N."/>
            <person name="Ivanova N."/>
            <person name="Richardson P."/>
        </authorList>
    </citation>
    <scope>NUCLEOTIDE SEQUENCE [LARGE SCALE GENOMIC DNA]</scope>
    <source>
        <strain>DSM 2380 / NBRC 103641 / GraBd1</strain>
    </source>
</reference>
<keyword id="KW-0963">Cytoplasm</keyword>
<keyword id="KW-0413">Isomerase</keyword>
<keyword id="KW-0627">Porphyrin biosynthesis</keyword>
<keyword id="KW-0663">Pyridoxal phosphate</keyword>
<keyword id="KW-1185">Reference proteome</keyword>
<protein>
    <recommendedName>
        <fullName evidence="1">Glutamate-1-semialdehyde 2,1-aminomutase</fullName>
        <shortName evidence="1">GSA</shortName>
        <ecNumber evidence="1">5.4.3.8</ecNumber>
    </recommendedName>
    <alternativeName>
        <fullName evidence="1">Glutamate-1-semialdehyde aminotransferase</fullName>
        <shortName evidence="1">GSA-AT</shortName>
    </alternativeName>
</protein>
<name>GSA_SYNC1</name>
<proteinExistence type="inferred from homology"/>